<feature type="chain" id="PRO_1000093459" description="Peptide chain release factor 1">
    <location>
        <begin position="1"/>
        <end position="355"/>
    </location>
</feature>
<feature type="modified residue" description="N5-methylglutamine" evidence="1">
    <location>
        <position position="230"/>
    </location>
</feature>
<comment type="function">
    <text evidence="1">Peptide chain release factor 1 directs the termination of translation in response to the peptide chain termination codons UAG and UAA.</text>
</comment>
<comment type="subcellular location">
    <subcellularLocation>
        <location evidence="1">Cytoplasm</location>
    </subcellularLocation>
</comment>
<comment type="PTM">
    <text evidence="1">Methylated by PrmC. Methylation increases the termination efficiency of RF1.</text>
</comment>
<comment type="similarity">
    <text evidence="1">Belongs to the prokaryotic/mitochondrial release factor family.</text>
</comment>
<keyword id="KW-0963">Cytoplasm</keyword>
<keyword id="KW-0488">Methylation</keyword>
<keyword id="KW-0648">Protein biosynthesis</keyword>
<keyword id="KW-1185">Reference proteome</keyword>
<sequence length="355" mass="40215">MFDKIQDLEIRFQELESLLSDPTVIANQPEFRKLSREHADLAPLIEAFRRYKKVLDELEENQELLADPEMKEMAEEEISRLSQEKERLDAEIKILLLPKDPNDSRDVILEIRAGTGGDESALFSGDLFRMYSRFAEKNRWKVEMLSCSESERGGYKEVIASIEGQDVYAKLKYESGTHRVQRVPETEAQGRIHTSACTVAIMAEAEDVDIDINPADLKIDVYRSSGAGGQHVNTTDSAVRITHIPTGTVVACQEERSQIKNRAKAMKVLKTRILDTIQQEQNAKLAADRKQQVGSGDRSERIRTYNFPQGRMTDHRIGLTLYRLDSIMAGDIEEITDALRAHYQMEALKAQSEGA</sequence>
<evidence type="ECO:0000255" key="1">
    <source>
        <dbReference type="HAMAP-Rule" id="MF_00093"/>
    </source>
</evidence>
<dbReference type="EMBL" id="CP001089">
    <property type="protein sequence ID" value="ACD94752.1"/>
    <property type="molecule type" value="Genomic_DNA"/>
</dbReference>
<dbReference type="RefSeq" id="WP_012469102.1">
    <property type="nucleotide sequence ID" value="NC_010814.1"/>
</dbReference>
<dbReference type="SMR" id="B3E628"/>
<dbReference type="STRING" id="398767.Glov_1029"/>
<dbReference type="KEGG" id="glo:Glov_1029"/>
<dbReference type="eggNOG" id="COG0216">
    <property type="taxonomic scope" value="Bacteria"/>
</dbReference>
<dbReference type="HOGENOM" id="CLU_036856_0_1_7"/>
<dbReference type="OrthoDB" id="9806673at2"/>
<dbReference type="Proteomes" id="UP000002420">
    <property type="component" value="Chromosome"/>
</dbReference>
<dbReference type="GO" id="GO:0005737">
    <property type="term" value="C:cytoplasm"/>
    <property type="evidence" value="ECO:0007669"/>
    <property type="project" value="UniProtKB-SubCell"/>
</dbReference>
<dbReference type="GO" id="GO:0016149">
    <property type="term" value="F:translation release factor activity, codon specific"/>
    <property type="evidence" value="ECO:0007669"/>
    <property type="project" value="UniProtKB-UniRule"/>
</dbReference>
<dbReference type="FunFam" id="3.30.160.20:FF:000004">
    <property type="entry name" value="Peptide chain release factor 1"/>
    <property type="match status" value="1"/>
</dbReference>
<dbReference type="FunFam" id="3.30.70.1660:FF:000002">
    <property type="entry name" value="Peptide chain release factor 1"/>
    <property type="match status" value="1"/>
</dbReference>
<dbReference type="FunFam" id="3.30.70.1660:FF:000004">
    <property type="entry name" value="Peptide chain release factor 1"/>
    <property type="match status" value="1"/>
</dbReference>
<dbReference type="Gene3D" id="3.30.160.20">
    <property type="match status" value="1"/>
</dbReference>
<dbReference type="Gene3D" id="3.30.70.1660">
    <property type="match status" value="1"/>
</dbReference>
<dbReference type="Gene3D" id="6.10.140.1950">
    <property type="match status" value="1"/>
</dbReference>
<dbReference type="HAMAP" id="MF_00093">
    <property type="entry name" value="Rel_fac_1"/>
    <property type="match status" value="1"/>
</dbReference>
<dbReference type="InterPro" id="IPR005139">
    <property type="entry name" value="PCRF"/>
</dbReference>
<dbReference type="InterPro" id="IPR000352">
    <property type="entry name" value="Pep_chain_release_fac_I"/>
</dbReference>
<dbReference type="InterPro" id="IPR045853">
    <property type="entry name" value="Pep_chain_release_fac_I_sf"/>
</dbReference>
<dbReference type="InterPro" id="IPR050057">
    <property type="entry name" value="Prokaryotic/Mito_RF"/>
</dbReference>
<dbReference type="InterPro" id="IPR004373">
    <property type="entry name" value="RF-1"/>
</dbReference>
<dbReference type="NCBIfam" id="TIGR00019">
    <property type="entry name" value="prfA"/>
    <property type="match status" value="1"/>
</dbReference>
<dbReference type="NCBIfam" id="NF001859">
    <property type="entry name" value="PRK00591.1"/>
    <property type="match status" value="1"/>
</dbReference>
<dbReference type="PANTHER" id="PTHR43804">
    <property type="entry name" value="LD18447P"/>
    <property type="match status" value="1"/>
</dbReference>
<dbReference type="PANTHER" id="PTHR43804:SF7">
    <property type="entry name" value="LD18447P"/>
    <property type="match status" value="1"/>
</dbReference>
<dbReference type="Pfam" id="PF03462">
    <property type="entry name" value="PCRF"/>
    <property type="match status" value="1"/>
</dbReference>
<dbReference type="Pfam" id="PF00472">
    <property type="entry name" value="RF-1"/>
    <property type="match status" value="1"/>
</dbReference>
<dbReference type="SMART" id="SM00937">
    <property type="entry name" value="PCRF"/>
    <property type="match status" value="1"/>
</dbReference>
<dbReference type="SUPFAM" id="SSF75620">
    <property type="entry name" value="Release factor"/>
    <property type="match status" value="1"/>
</dbReference>
<dbReference type="PROSITE" id="PS00745">
    <property type="entry name" value="RF_PROK_I"/>
    <property type="match status" value="1"/>
</dbReference>
<protein>
    <recommendedName>
        <fullName evidence="1">Peptide chain release factor 1</fullName>
        <shortName evidence="1">RF-1</shortName>
    </recommendedName>
</protein>
<name>RF1_TRIL1</name>
<proteinExistence type="inferred from homology"/>
<gene>
    <name evidence="1" type="primary">prfA</name>
    <name type="ordered locus">Glov_1029</name>
</gene>
<accession>B3E628</accession>
<reference key="1">
    <citation type="submission" date="2008-05" db="EMBL/GenBank/DDBJ databases">
        <title>Complete sequence of chromosome of Geobacter lovleyi SZ.</title>
        <authorList>
            <consortium name="US DOE Joint Genome Institute"/>
            <person name="Lucas S."/>
            <person name="Copeland A."/>
            <person name="Lapidus A."/>
            <person name="Glavina del Rio T."/>
            <person name="Dalin E."/>
            <person name="Tice H."/>
            <person name="Bruce D."/>
            <person name="Goodwin L."/>
            <person name="Pitluck S."/>
            <person name="Chertkov O."/>
            <person name="Meincke L."/>
            <person name="Brettin T."/>
            <person name="Detter J.C."/>
            <person name="Han C."/>
            <person name="Tapia R."/>
            <person name="Kuske C.R."/>
            <person name="Schmutz J."/>
            <person name="Larimer F."/>
            <person name="Land M."/>
            <person name="Hauser L."/>
            <person name="Kyrpides N."/>
            <person name="Mikhailova N."/>
            <person name="Sung Y."/>
            <person name="Fletcher K.E."/>
            <person name="Ritalahti K.M."/>
            <person name="Loeffler F.E."/>
            <person name="Richardson P."/>
        </authorList>
    </citation>
    <scope>NUCLEOTIDE SEQUENCE [LARGE SCALE GENOMIC DNA]</scope>
    <source>
        <strain>ATCC BAA-1151 / DSM 17278 / SZ</strain>
    </source>
</reference>
<organism>
    <name type="scientific">Trichlorobacter lovleyi (strain ATCC BAA-1151 / DSM 17278 / SZ)</name>
    <name type="common">Geobacter lovleyi</name>
    <dbReference type="NCBI Taxonomy" id="398767"/>
    <lineage>
        <taxon>Bacteria</taxon>
        <taxon>Pseudomonadati</taxon>
        <taxon>Thermodesulfobacteriota</taxon>
        <taxon>Desulfuromonadia</taxon>
        <taxon>Geobacterales</taxon>
        <taxon>Geobacteraceae</taxon>
        <taxon>Trichlorobacter</taxon>
    </lineage>
</organism>